<proteinExistence type="inferred from homology"/>
<evidence type="ECO:0000250" key="1"/>
<evidence type="ECO:0000255" key="2">
    <source>
        <dbReference type="HAMAP-Rule" id="MF_00223"/>
    </source>
</evidence>
<evidence type="ECO:0000256" key="3">
    <source>
        <dbReference type="SAM" id="MobiDB-lite"/>
    </source>
</evidence>
<sequence>MTTFPMPDSIINGKATTPAVLPDRNTHQGKEPIPHPPPPEVAKEEMMAAVRTILLNVGEDPDREGLLKTPKRVAEAMQFLTSGYSQSLETLVNGAIFDEGHDEMVLVRDINFFSLCEHHMLPFIGKAHVAYIPNQRVIGLSKLARVVEMYARRLQVQERLTRQVAEAIETVLDPKGVAVVMEATHMCMVMRGVQKPGSWTVTSSMLGVFREDQKTREEFLNLIRHQPNF</sequence>
<dbReference type="EC" id="3.5.4.16" evidence="2"/>
<dbReference type="EMBL" id="BA000039">
    <property type="protein sequence ID" value="BAC08861.1"/>
    <property type="molecule type" value="Genomic_DNA"/>
</dbReference>
<dbReference type="RefSeq" id="NP_682099.1">
    <property type="nucleotide sequence ID" value="NC_004113.1"/>
</dbReference>
<dbReference type="SMR" id="Q8DJB8"/>
<dbReference type="STRING" id="197221.gene:10747907"/>
<dbReference type="EnsemblBacteria" id="BAC08861">
    <property type="protein sequence ID" value="BAC08861"/>
    <property type="gene ID" value="BAC08861"/>
</dbReference>
<dbReference type="KEGG" id="tel:tll1309"/>
<dbReference type="PATRIC" id="fig|197221.4.peg.1377"/>
<dbReference type="eggNOG" id="COG0302">
    <property type="taxonomic scope" value="Bacteria"/>
</dbReference>
<dbReference type="UniPathway" id="UPA00848">
    <property type="reaction ID" value="UER00151"/>
</dbReference>
<dbReference type="Proteomes" id="UP000000440">
    <property type="component" value="Chromosome"/>
</dbReference>
<dbReference type="GO" id="GO:0005737">
    <property type="term" value="C:cytoplasm"/>
    <property type="evidence" value="ECO:0007669"/>
    <property type="project" value="TreeGrafter"/>
</dbReference>
<dbReference type="GO" id="GO:0005525">
    <property type="term" value="F:GTP binding"/>
    <property type="evidence" value="ECO:0007669"/>
    <property type="project" value="UniProtKB-KW"/>
</dbReference>
<dbReference type="GO" id="GO:0003934">
    <property type="term" value="F:GTP cyclohydrolase I activity"/>
    <property type="evidence" value="ECO:0007669"/>
    <property type="project" value="UniProtKB-UniRule"/>
</dbReference>
<dbReference type="GO" id="GO:0008270">
    <property type="term" value="F:zinc ion binding"/>
    <property type="evidence" value="ECO:0007669"/>
    <property type="project" value="UniProtKB-UniRule"/>
</dbReference>
<dbReference type="GO" id="GO:0006730">
    <property type="term" value="P:one-carbon metabolic process"/>
    <property type="evidence" value="ECO:0007669"/>
    <property type="project" value="UniProtKB-UniRule"/>
</dbReference>
<dbReference type="GO" id="GO:0006729">
    <property type="term" value="P:tetrahydrobiopterin biosynthetic process"/>
    <property type="evidence" value="ECO:0007669"/>
    <property type="project" value="TreeGrafter"/>
</dbReference>
<dbReference type="GO" id="GO:0046654">
    <property type="term" value="P:tetrahydrofolate biosynthetic process"/>
    <property type="evidence" value="ECO:0007669"/>
    <property type="project" value="UniProtKB-UniRule"/>
</dbReference>
<dbReference type="CDD" id="cd00642">
    <property type="entry name" value="GTP_cyclohydro1"/>
    <property type="match status" value="1"/>
</dbReference>
<dbReference type="FunFam" id="1.10.286.10:FF:000003">
    <property type="entry name" value="GTP cyclohydrolase 1"/>
    <property type="match status" value="1"/>
</dbReference>
<dbReference type="FunFam" id="3.30.1130.10:FF:000012">
    <property type="entry name" value="GTP cyclohydrolase 1"/>
    <property type="match status" value="1"/>
</dbReference>
<dbReference type="Gene3D" id="1.10.286.10">
    <property type="match status" value="1"/>
</dbReference>
<dbReference type="Gene3D" id="3.30.1130.10">
    <property type="match status" value="1"/>
</dbReference>
<dbReference type="HAMAP" id="MF_00223">
    <property type="entry name" value="FolE"/>
    <property type="match status" value="1"/>
</dbReference>
<dbReference type="InterPro" id="IPR043133">
    <property type="entry name" value="GTP-CH-I_C/QueF"/>
</dbReference>
<dbReference type="InterPro" id="IPR043134">
    <property type="entry name" value="GTP-CH-I_N"/>
</dbReference>
<dbReference type="InterPro" id="IPR001474">
    <property type="entry name" value="GTP_CycHdrlase_I"/>
</dbReference>
<dbReference type="InterPro" id="IPR018234">
    <property type="entry name" value="GTP_CycHdrlase_I_CS"/>
</dbReference>
<dbReference type="InterPro" id="IPR020602">
    <property type="entry name" value="GTP_CycHdrlase_I_dom"/>
</dbReference>
<dbReference type="NCBIfam" id="TIGR00063">
    <property type="entry name" value="folE"/>
    <property type="match status" value="1"/>
</dbReference>
<dbReference type="NCBIfam" id="NF006825">
    <property type="entry name" value="PRK09347.1-2"/>
    <property type="match status" value="1"/>
</dbReference>
<dbReference type="NCBIfam" id="NF006826">
    <property type="entry name" value="PRK09347.1-3"/>
    <property type="match status" value="1"/>
</dbReference>
<dbReference type="PANTHER" id="PTHR11109:SF7">
    <property type="entry name" value="GTP CYCLOHYDROLASE 1"/>
    <property type="match status" value="1"/>
</dbReference>
<dbReference type="PANTHER" id="PTHR11109">
    <property type="entry name" value="GTP CYCLOHYDROLASE I"/>
    <property type="match status" value="1"/>
</dbReference>
<dbReference type="Pfam" id="PF01227">
    <property type="entry name" value="GTP_cyclohydroI"/>
    <property type="match status" value="1"/>
</dbReference>
<dbReference type="SUPFAM" id="SSF55620">
    <property type="entry name" value="Tetrahydrobiopterin biosynthesis enzymes-like"/>
    <property type="match status" value="1"/>
</dbReference>
<dbReference type="PROSITE" id="PS00859">
    <property type="entry name" value="GTP_CYCLOHYDROL_1_1"/>
    <property type="match status" value="1"/>
</dbReference>
<dbReference type="PROSITE" id="PS00860">
    <property type="entry name" value="GTP_CYCLOHYDROL_1_2"/>
    <property type="match status" value="1"/>
</dbReference>
<reference key="1">
    <citation type="journal article" date="2002" name="DNA Res.">
        <title>Complete genome structure of the thermophilic cyanobacterium Thermosynechococcus elongatus BP-1.</title>
        <authorList>
            <person name="Nakamura Y."/>
            <person name="Kaneko T."/>
            <person name="Sato S."/>
            <person name="Ikeuchi M."/>
            <person name="Katoh H."/>
            <person name="Sasamoto S."/>
            <person name="Watanabe A."/>
            <person name="Iriguchi M."/>
            <person name="Kawashima K."/>
            <person name="Kimura T."/>
            <person name="Kishida Y."/>
            <person name="Kiyokawa C."/>
            <person name="Kohara M."/>
            <person name="Matsumoto M."/>
            <person name="Matsuno A."/>
            <person name="Nakazaki N."/>
            <person name="Shimpo S."/>
            <person name="Sugimoto M."/>
            <person name="Takeuchi C."/>
            <person name="Yamada M."/>
            <person name="Tabata S."/>
        </authorList>
    </citation>
    <scope>NUCLEOTIDE SEQUENCE [LARGE SCALE GENOMIC DNA]</scope>
    <source>
        <strain>NIES-2133 / IAM M-273 / BP-1</strain>
    </source>
</reference>
<accession>Q8DJB8</accession>
<organism>
    <name type="scientific">Thermosynechococcus vestitus (strain NIES-2133 / IAM M-273 / BP-1)</name>
    <dbReference type="NCBI Taxonomy" id="197221"/>
    <lineage>
        <taxon>Bacteria</taxon>
        <taxon>Bacillati</taxon>
        <taxon>Cyanobacteriota</taxon>
        <taxon>Cyanophyceae</taxon>
        <taxon>Acaryochloridales</taxon>
        <taxon>Thermosynechococcaceae</taxon>
        <taxon>Thermosynechococcus</taxon>
    </lineage>
</organism>
<name>GCH1_THEVB</name>
<protein>
    <recommendedName>
        <fullName evidence="2">GTP cyclohydrolase 1</fullName>
        <ecNumber evidence="2">3.5.4.16</ecNumber>
    </recommendedName>
    <alternativeName>
        <fullName evidence="2">GTP cyclohydrolase I</fullName>
        <shortName evidence="2">GTP-CH-I</shortName>
    </alternativeName>
</protein>
<feature type="chain" id="PRO_0000119456" description="GTP cyclohydrolase 1">
    <location>
        <begin position="1"/>
        <end position="229"/>
    </location>
</feature>
<feature type="region of interest" description="Disordered" evidence="3">
    <location>
        <begin position="1"/>
        <end position="40"/>
    </location>
</feature>
<feature type="compositionally biased region" description="Basic and acidic residues" evidence="3">
    <location>
        <begin position="24"/>
        <end position="33"/>
    </location>
</feature>
<feature type="binding site" evidence="2">
    <location>
        <position position="116"/>
    </location>
    <ligand>
        <name>Zn(2+)</name>
        <dbReference type="ChEBI" id="CHEBI:29105"/>
    </ligand>
</feature>
<feature type="binding site" evidence="2">
    <location>
        <position position="119"/>
    </location>
    <ligand>
        <name>Zn(2+)</name>
        <dbReference type="ChEBI" id="CHEBI:29105"/>
    </ligand>
</feature>
<feature type="binding site" evidence="2">
    <location>
        <position position="187"/>
    </location>
    <ligand>
        <name>Zn(2+)</name>
        <dbReference type="ChEBI" id="CHEBI:29105"/>
    </ligand>
</feature>
<keyword id="KW-0342">GTP-binding</keyword>
<keyword id="KW-0378">Hydrolase</keyword>
<keyword id="KW-0479">Metal-binding</keyword>
<keyword id="KW-0547">Nucleotide-binding</keyword>
<keyword id="KW-0554">One-carbon metabolism</keyword>
<keyword id="KW-1185">Reference proteome</keyword>
<keyword id="KW-0862">Zinc</keyword>
<gene>
    <name evidence="2" type="primary">folE</name>
    <name type="ordered locus">tll1309</name>
</gene>
<comment type="catalytic activity">
    <reaction evidence="2">
        <text>GTP + H2O = 7,8-dihydroneopterin 3'-triphosphate + formate + H(+)</text>
        <dbReference type="Rhea" id="RHEA:17473"/>
        <dbReference type="ChEBI" id="CHEBI:15377"/>
        <dbReference type="ChEBI" id="CHEBI:15378"/>
        <dbReference type="ChEBI" id="CHEBI:15740"/>
        <dbReference type="ChEBI" id="CHEBI:37565"/>
        <dbReference type="ChEBI" id="CHEBI:58462"/>
        <dbReference type="EC" id="3.5.4.16"/>
    </reaction>
</comment>
<comment type="pathway">
    <text evidence="2">Cofactor biosynthesis; 7,8-dihydroneopterin triphosphate biosynthesis; 7,8-dihydroneopterin triphosphate from GTP: step 1/1.</text>
</comment>
<comment type="subunit">
    <text evidence="1">Toroid-shaped homodecamer, composed of two pentamers of five dimers.</text>
</comment>
<comment type="similarity">
    <text evidence="2">Belongs to the GTP cyclohydrolase I family.</text>
</comment>